<evidence type="ECO:0000250" key="1"/>
<evidence type="ECO:0000255" key="2"/>
<evidence type="ECO:0000255" key="3">
    <source>
        <dbReference type="PROSITE-ProRule" id="PRU00031"/>
    </source>
</evidence>
<evidence type="ECO:0000303" key="4">
    <source>
    </source>
</evidence>
<evidence type="ECO:0000305" key="5"/>
<protein>
    <recommendedName>
        <fullName evidence="4">Kunitz-type serine protease inhibitor textilinin-5</fullName>
        <shortName evidence="4">Txln-5</shortName>
    </recommendedName>
</protein>
<proteinExistence type="evidence at transcript level"/>
<feature type="signal peptide" evidence="2">
    <location>
        <begin position="1"/>
        <end position="24"/>
    </location>
</feature>
<feature type="chain" id="PRO_0000377477" description="Kunitz-type serine protease inhibitor textilinin-5">
    <location>
        <begin position="25"/>
        <end position="83"/>
    </location>
</feature>
<feature type="domain" description="BPTI/Kunitz inhibitor" evidence="3">
    <location>
        <begin position="31"/>
        <end position="81"/>
    </location>
</feature>
<feature type="disulfide bond" evidence="3">
    <location>
        <begin position="31"/>
        <end position="81"/>
    </location>
</feature>
<feature type="disulfide bond" evidence="3">
    <location>
        <begin position="40"/>
        <end position="64"/>
    </location>
</feature>
<feature type="disulfide bond" evidence="3">
    <location>
        <begin position="56"/>
        <end position="77"/>
    </location>
</feature>
<reference key="1">
    <citation type="journal article" date="2002" name="Br. J. Haematol.">
        <title>A family of textilinin genes, two of which encode proteins with antihaemorrhagic properties.</title>
        <authorList>
            <person name="Filippovich I."/>
            <person name="Sorokina N."/>
            <person name="Masci P.P."/>
            <person name="de Jersey J."/>
            <person name="Whitaker A.N."/>
            <person name="Winzor D.J."/>
            <person name="Gaffney P.J."/>
            <person name="Lavin M.F."/>
        </authorList>
    </citation>
    <scope>NUCLEOTIDE SEQUENCE [MRNA]</scope>
    <source>
        <tissue>Venom gland</tissue>
    </source>
</reference>
<sequence length="83" mass="9031">MSSGGLLLLLGLLTLWEVLTPVSSKDRPKFCELLPDTGSCEDFTGAFHYSTRDRECIEFIYGGCGGNANNFITKEECESTCAA</sequence>
<organism>
    <name type="scientific">Pseudonaja textilis textilis</name>
    <name type="common">Eastern brown snake</name>
    <dbReference type="NCBI Taxonomy" id="169397"/>
    <lineage>
        <taxon>Eukaryota</taxon>
        <taxon>Metazoa</taxon>
        <taxon>Chordata</taxon>
        <taxon>Craniata</taxon>
        <taxon>Vertebrata</taxon>
        <taxon>Euteleostomi</taxon>
        <taxon>Lepidosauria</taxon>
        <taxon>Squamata</taxon>
        <taxon>Bifurcata</taxon>
        <taxon>Unidentata</taxon>
        <taxon>Episquamata</taxon>
        <taxon>Toxicofera</taxon>
        <taxon>Serpentes</taxon>
        <taxon>Colubroidea</taxon>
        <taxon>Elapidae</taxon>
        <taxon>Hydrophiinae</taxon>
        <taxon>Pseudonaja</taxon>
    </lineage>
</organism>
<accession>Q90W97</accession>
<dbReference type="EMBL" id="AF402328">
    <property type="protein sequence ID" value="AAK95523.1"/>
    <property type="molecule type" value="mRNA"/>
</dbReference>
<dbReference type="SMR" id="Q90W97"/>
<dbReference type="MEROPS" id="I02.052"/>
<dbReference type="GO" id="GO:0005615">
    <property type="term" value="C:extracellular space"/>
    <property type="evidence" value="ECO:0007669"/>
    <property type="project" value="TreeGrafter"/>
</dbReference>
<dbReference type="GO" id="GO:0004867">
    <property type="term" value="F:serine-type endopeptidase inhibitor activity"/>
    <property type="evidence" value="ECO:0007669"/>
    <property type="project" value="UniProtKB-KW"/>
</dbReference>
<dbReference type="CDD" id="cd22594">
    <property type="entry name" value="Kunitz_textilinin-like"/>
    <property type="match status" value="1"/>
</dbReference>
<dbReference type="FunFam" id="4.10.410.10:FF:000020">
    <property type="entry name" value="Collagen, type VI, alpha 3"/>
    <property type="match status" value="1"/>
</dbReference>
<dbReference type="Gene3D" id="4.10.410.10">
    <property type="entry name" value="Pancreatic trypsin inhibitor Kunitz domain"/>
    <property type="match status" value="1"/>
</dbReference>
<dbReference type="InterPro" id="IPR002223">
    <property type="entry name" value="Kunitz_BPTI"/>
</dbReference>
<dbReference type="InterPro" id="IPR036880">
    <property type="entry name" value="Kunitz_BPTI_sf"/>
</dbReference>
<dbReference type="InterPro" id="IPR020901">
    <property type="entry name" value="Prtase_inh_Kunz-CS"/>
</dbReference>
<dbReference type="InterPro" id="IPR050098">
    <property type="entry name" value="TFPI/VKTCI-like"/>
</dbReference>
<dbReference type="PANTHER" id="PTHR10083:SF374">
    <property type="entry name" value="BPTI_KUNITZ INHIBITOR DOMAIN-CONTAINING PROTEIN"/>
    <property type="match status" value="1"/>
</dbReference>
<dbReference type="PANTHER" id="PTHR10083">
    <property type="entry name" value="KUNITZ-TYPE PROTEASE INHIBITOR-RELATED"/>
    <property type="match status" value="1"/>
</dbReference>
<dbReference type="Pfam" id="PF00014">
    <property type="entry name" value="Kunitz_BPTI"/>
    <property type="match status" value="1"/>
</dbReference>
<dbReference type="PRINTS" id="PR00759">
    <property type="entry name" value="BASICPTASE"/>
</dbReference>
<dbReference type="SMART" id="SM00131">
    <property type="entry name" value="KU"/>
    <property type="match status" value="1"/>
</dbReference>
<dbReference type="SUPFAM" id="SSF57362">
    <property type="entry name" value="BPTI-like"/>
    <property type="match status" value="1"/>
</dbReference>
<dbReference type="PROSITE" id="PS00280">
    <property type="entry name" value="BPTI_KUNITZ_1"/>
    <property type="match status" value="1"/>
</dbReference>
<dbReference type="PROSITE" id="PS50279">
    <property type="entry name" value="BPTI_KUNITZ_2"/>
    <property type="match status" value="1"/>
</dbReference>
<name>VKT5_PSETT</name>
<keyword id="KW-1015">Disulfide bond</keyword>
<keyword id="KW-0646">Protease inhibitor</keyword>
<keyword id="KW-0964">Secreted</keyword>
<keyword id="KW-0722">Serine protease inhibitor</keyword>
<keyword id="KW-0732">Signal</keyword>
<comment type="function">
    <text evidence="1">Serine protease inhibitor (By similarity). Does not inhibit plasmin, and does not reduce blood loss in the mouse tail vein blood loss model.</text>
</comment>
<comment type="subcellular location">
    <subcellularLocation>
        <location evidence="1">Secreted</location>
    </subcellularLocation>
</comment>
<comment type="tissue specificity">
    <text>Expressed by the venom gland.</text>
</comment>
<comment type="similarity">
    <text evidence="5">Belongs to the venom Kunitz-type family.</text>
</comment>